<organism>
    <name type="scientific">Homo sapiens</name>
    <name type="common">Human</name>
    <dbReference type="NCBI Taxonomy" id="9606"/>
    <lineage>
        <taxon>Eukaryota</taxon>
        <taxon>Metazoa</taxon>
        <taxon>Chordata</taxon>
        <taxon>Craniata</taxon>
        <taxon>Vertebrata</taxon>
        <taxon>Euteleostomi</taxon>
        <taxon>Mammalia</taxon>
        <taxon>Eutheria</taxon>
        <taxon>Euarchontoglires</taxon>
        <taxon>Primates</taxon>
        <taxon>Haplorrhini</taxon>
        <taxon>Catarrhini</taxon>
        <taxon>Hominidae</taxon>
        <taxon>Homo</taxon>
    </lineage>
</organism>
<sequence>MPMPSRDGGLHPRHHHYGSHSPWSQLLSSPMETPSIKGLYYRRVRKVGALDASPVDLKKEILINVGGRRYLLPWSTLDRFPLSRLSKLRLCRSYEEIVQLCDDYDEDSQEFFFDRSPSAFGVIVSFLAAGKLVLLQEMCALSFQEELAYWGIEEAHLERCCLRKLLRKLEELEELAKLHREDVLRQQRETRRPASHSSRWGLCMNRLREMVENPQSGLPGKVFACLSILFVATTAVSLCVSTMPDLRAEEDQGECSRKCYYIFIVETICVAWFSLEFCLRFVQAQDKCQFFQGPLNIIDILAISPYYVSLAVSEEPPEDGERPSGSSYLEKVGLVLRVLRALRILYVMRLARHSLGLQTLGLTVRRCTREFGLLLLFLAVAITLFSPLVYVAEKESGRVLEFTSIPASYWWAIISMTTVGYGDMVPRSVPGQMVALSSILSGILIMAFPATSIFHTFSHSYLELKKEQEQLQARLRHLQNTGPASECELLDPHVASEHELMNDVNDLILEGPALPIMHM</sequence>
<keyword id="KW-0025">Alternative splicing</keyword>
<keyword id="KW-1003">Cell membrane</keyword>
<keyword id="KW-0407">Ion channel</keyword>
<keyword id="KW-0406">Ion transport</keyword>
<keyword id="KW-0472">Membrane</keyword>
<keyword id="KW-0630">Potassium</keyword>
<keyword id="KW-0631">Potassium channel</keyword>
<keyword id="KW-0633">Potassium transport</keyword>
<keyword id="KW-1185">Reference proteome</keyword>
<keyword id="KW-0812">Transmembrane</keyword>
<keyword id="KW-1133">Transmembrane helix</keyword>
<keyword id="KW-0813">Transport</keyword>
<keyword id="KW-0851">Voltage-gated channel</keyword>
<dbReference type="EMBL" id="AF348984">
    <property type="protein sequence ID" value="AAL83911.1"/>
    <property type="molecule type" value="mRNA"/>
</dbReference>
<dbReference type="EMBL" id="BC008969">
    <property type="protein sequence ID" value="AAH08969.1"/>
    <property type="molecule type" value="mRNA"/>
</dbReference>
<dbReference type="CCDS" id="CCDS10945.1">
    <molecule id="Q8TDN1-1"/>
</dbReference>
<dbReference type="RefSeq" id="NP_758857.1">
    <molecule id="Q8TDN1-1"/>
    <property type="nucleotide sequence ID" value="NM_172347.3"/>
</dbReference>
<dbReference type="SMR" id="Q8TDN1"/>
<dbReference type="BioGRID" id="125002">
    <property type="interactions" value="19"/>
</dbReference>
<dbReference type="CORUM" id="Q8TDN1"/>
<dbReference type="FunCoup" id="Q8TDN1">
    <property type="interactions" value="17"/>
</dbReference>
<dbReference type="IntAct" id="Q8TDN1">
    <property type="interactions" value="13"/>
</dbReference>
<dbReference type="STRING" id="9606.ENSP00000312129"/>
<dbReference type="ChEMBL" id="CHEMBL2362996"/>
<dbReference type="DrugBank" id="DB00228">
    <property type="generic name" value="Enflurane"/>
</dbReference>
<dbReference type="DrugBank" id="DB01110">
    <property type="generic name" value="Miconazole"/>
</dbReference>
<dbReference type="DrugBank" id="DB01069">
    <property type="generic name" value="Promethazine"/>
</dbReference>
<dbReference type="DrugCentral" id="Q8TDN1"/>
<dbReference type="TCDB" id="1.A.1.2.26">
    <property type="family name" value="the voltage-gated ion channel (vic) superfamily"/>
</dbReference>
<dbReference type="GlyGen" id="Q8TDN1">
    <property type="glycosylation" value="1 site, 1 O-linked glycan (1 site)"/>
</dbReference>
<dbReference type="PhosphoSitePlus" id="Q8TDN1"/>
<dbReference type="SwissPalm" id="Q8TDN1"/>
<dbReference type="BioMuta" id="KCNG4"/>
<dbReference type="DMDM" id="26006803"/>
<dbReference type="PaxDb" id="9606-ENSP00000312129"/>
<dbReference type="Antibodypedia" id="30581">
    <property type="antibodies" value="100 antibodies from 25 providers"/>
</dbReference>
<dbReference type="DNASU" id="93107"/>
<dbReference type="Ensembl" id="ENST00000308251.6">
    <molecule id="Q8TDN1-1"/>
    <property type="protein sequence ID" value="ENSP00000312129.4"/>
    <property type="gene ID" value="ENSG00000168418.8"/>
</dbReference>
<dbReference type="Ensembl" id="ENST00000568181.1">
    <molecule id="Q8TDN1-2"/>
    <property type="protein sequence ID" value="ENSP00000457897.1"/>
    <property type="gene ID" value="ENSG00000168418.8"/>
</dbReference>
<dbReference type="GeneID" id="93107"/>
<dbReference type="KEGG" id="hsa:93107"/>
<dbReference type="MANE-Select" id="ENST00000308251.6">
    <property type="protein sequence ID" value="ENSP00000312129.4"/>
    <property type="RefSeq nucleotide sequence ID" value="NM_172347.3"/>
    <property type="RefSeq protein sequence ID" value="NP_758857.1"/>
</dbReference>
<dbReference type="UCSC" id="uc002fhu.1">
    <molecule id="Q8TDN1-1"/>
    <property type="organism name" value="human"/>
</dbReference>
<dbReference type="AGR" id="HGNC:19697"/>
<dbReference type="CTD" id="93107"/>
<dbReference type="DisGeNET" id="93107"/>
<dbReference type="GeneCards" id="KCNG4"/>
<dbReference type="HGNC" id="HGNC:19697">
    <property type="gene designation" value="KCNG4"/>
</dbReference>
<dbReference type="HPA" id="ENSG00000168418">
    <property type="expression patterns" value="Tissue enriched (retina)"/>
</dbReference>
<dbReference type="MIM" id="607603">
    <property type="type" value="gene"/>
</dbReference>
<dbReference type="neXtProt" id="NX_Q8TDN1"/>
<dbReference type="OpenTargets" id="ENSG00000168418"/>
<dbReference type="PharmGKB" id="PA134989953"/>
<dbReference type="VEuPathDB" id="HostDB:ENSG00000168418"/>
<dbReference type="eggNOG" id="KOG3713">
    <property type="taxonomic scope" value="Eukaryota"/>
</dbReference>
<dbReference type="GeneTree" id="ENSGT00940000156938"/>
<dbReference type="HOGENOM" id="CLU_011722_4_1_1"/>
<dbReference type="InParanoid" id="Q8TDN1"/>
<dbReference type="OMA" id="VQARNKC"/>
<dbReference type="OrthoDB" id="296522at2759"/>
<dbReference type="PAN-GO" id="Q8TDN1">
    <property type="GO annotations" value="4 GO annotations based on evolutionary models"/>
</dbReference>
<dbReference type="PhylomeDB" id="Q8TDN1"/>
<dbReference type="TreeFam" id="TF313103"/>
<dbReference type="PathwayCommons" id="Q8TDN1"/>
<dbReference type="Reactome" id="R-HSA-1296072">
    <property type="pathway name" value="Voltage gated Potassium channels"/>
</dbReference>
<dbReference type="SignaLink" id="Q8TDN1"/>
<dbReference type="BioGRID-ORCS" id="93107">
    <property type="hits" value="16 hits in 1140 CRISPR screens"/>
</dbReference>
<dbReference type="GeneWiki" id="KCNG4"/>
<dbReference type="GenomeRNAi" id="93107"/>
<dbReference type="Pharos" id="Q8TDN1">
    <property type="development level" value="Tclin"/>
</dbReference>
<dbReference type="PRO" id="PR:Q8TDN1"/>
<dbReference type="Proteomes" id="UP000005640">
    <property type="component" value="Chromosome 16"/>
</dbReference>
<dbReference type="RNAct" id="Q8TDN1">
    <property type="molecule type" value="protein"/>
</dbReference>
<dbReference type="Bgee" id="ENSG00000168418">
    <property type="expression patterns" value="Expressed in male germ line stem cell (sensu Vertebrata) in testis and 27 other cell types or tissues"/>
</dbReference>
<dbReference type="ExpressionAtlas" id="Q8TDN1">
    <property type="expression patterns" value="baseline and differential"/>
</dbReference>
<dbReference type="GO" id="GO:0016020">
    <property type="term" value="C:membrane"/>
    <property type="evidence" value="ECO:0000318"/>
    <property type="project" value="GO_Central"/>
</dbReference>
<dbReference type="GO" id="GO:0005654">
    <property type="term" value="C:nucleoplasm"/>
    <property type="evidence" value="ECO:0000314"/>
    <property type="project" value="HPA"/>
</dbReference>
<dbReference type="GO" id="GO:0005886">
    <property type="term" value="C:plasma membrane"/>
    <property type="evidence" value="ECO:0000314"/>
    <property type="project" value="HPA"/>
</dbReference>
<dbReference type="GO" id="GO:0008076">
    <property type="term" value="C:voltage-gated potassium channel complex"/>
    <property type="evidence" value="ECO:0000314"/>
    <property type="project" value="GO_Central"/>
</dbReference>
<dbReference type="GO" id="GO:0015459">
    <property type="term" value="F:potassium channel regulator activity"/>
    <property type="evidence" value="ECO:0000314"/>
    <property type="project" value="UniProtKB"/>
</dbReference>
<dbReference type="GO" id="GO:0044325">
    <property type="term" value="F:transmembrane transporter binding"/>
    <property type="evidence" value="ECO:0000353"/>
    <property type="project" value="UniProtKB"/>
</dbReference>
<dbReference type="GO" id="GO:0005249">
    <property type="term" value="F:voltage-gated potassium channel activity"/>
    <property type="evidence" value="ECO:0007669"/>
    <property type="project" value="InterPro"/>
</dbReference>
<dbReference type="GO" id="GO:0001508">
    <property type="term" value="P:action potential"/>
    <property type="evidence" value="ECO:0000318"/>
    <property type="project" value="GO_Central"/>
</dbReference>
<dbReference type="GO" id="GO:0071805">
    <property type="term" value="P:potassium ion transmembrane transport"/>
    <property type="evidence" value="ECO:0000318"/>
    <property type="project" value="GO_Central"/>
</dbReference>
<dbReference type="GO" id="GO:0051260">
    <property type="term" value="P:protein homooligomerization"/>
    <property type="evidence" value="ECO:0007669"/>
    <property type="project" value="InterPro"/>
</dbReference>
<dbReference type="GO" id="GO:1901379">
    <property type="term" value="P:regulation of potassium ion transmembrane transport"/>
    <property type="evidence" value="ECO:0000314"/>
    <property type="project" value="UniProtKB"/>
</dbReference>
<dbReference type="GO" id="GO:0043266">
    <property type="term" value="P:regulation of potassium ion transport"/>
    <property type="evidence" value="ECO:0000314"/>
    <property type="project" value="UniProtKB"/>
</dbReference>
<dbReference type="CDD" id="cd18423">
    <property type="entry name" value="BTB_POZ_KCNG4"/>
    <property type="match status" value="1"/>
</dbReference>
<dbReference type="FunFam" id="1.20.120.350:FF:000024">
    <property type="entry name" value="Potassium voltage-gated channel subfamily G member 1"/>
    <property type="match status" value="1"/>
</dbReference>
<dbReference type="FunFam" id="1.10.287.70:FF:000005">
    <property type="entry name" value="potassium voltage-gated channel subfamily G member 1"/>
    <property type="match status" value="1"/>
</dbReference>
<dbReference type="FunFam" id="3.30.710.10:FF:000019">
    <property type="entry name" value="Potassium voltage-gated channel, subfamily G, member 1"/>
    <property type="match status" value="1"/>
</dbReference>
<dbReference type="Gene3D" id="1.10.287.70">
    <property type="match status" value="1"/>
</dbReference>
<dbReference type="Gene3D" id="3.30.710.10">
    <property type="entry name" value="Potassium Channel Kv1.1, Chain A"/>
    <property type="match status" value="1"/>
</dbReference>
<dbReference type="Gene3D" id="1.20.120.350">
    <property type="entry name" value="Voltage-gated potassium channels. Chain C"/>
    <property type="match status" value="1"/>
</dbReference>
<dbReference type="InterPro" id="IPR005821">
    <property type="entry name" value="Ion_trans_dom"/>
</dbReference>
<dbReference type="InterPro" id="IPR003968">
    <property type="entry name" value="K_chnl_volt-dep_Kv"/>
</dbReference>
<dbReference type="InterPro" id="IPR003971">
    <property type="entry name" value="K_chnl_volt-dep_Kv5/Kv9"/>
</dbReference>
<dbReference type="InterPro" id="IPR011333">
    <property type="entry name" value="SKP1/BTB/POZ_sf"/>
</dbReference>
<dbReference type="InterPro" id="IPR003131">
    <property type="entry name" value="T1-type_BTB"/>
</dbReference>
<dbReference type="InterPro" id="IPR028325">
    <property type="entry name" value="VG_K_chnl"/>
</dbReference>
<dbReference type="InterPro" id="IPR027359">
    <property type="entry name" value="Volt_channel_dom_sf"/>
</dbReference>
<dbReference type="PANTHER" id="PTHR11537:SF167">
    <property type="entry name" value="POTASSIUM VOLTAGE-GATED CHANNEL SUBFAMILY G MEMBER 4"/>
    <property type="match status" value="1"/>
</dbReference>
<dbReference type="PANTHER" id="PTHR11537">
    <property type="entry name" value="VOLTAGE-GATED POTASSIUM CHANNEL"/>
    <property type="match status" value="1"/>
</dbReference>
<dbReference type="Pfam" id="PF02214">
    <property type="entry name" value="BTB_2"/>
    <property type="match status" value="1"/>
</dbReference>
<dbReference type="Pfam" id="PF00520">
    <property type="entry name" value="Ion_trans"/>
    <property type="match status" value="1"/>
</dbReference>
<dbReference type="PRINTS" id="PR00169">
    <property type="entry name" value="KCHANNEL"/>
</dbReference>
<dbReference type="PRINTS" id="PR01494">
    <property type="entry name" value="KV9CHANNEL"/>
</dbReference>
<dbReference type="PRINTS" id="PR01491">
    <property type="entry name" value="KVCHANNEL"/>
</dbReference>
<dbReference type="SUPFAM" id="SSF54695">
    <property type="entry name" value="POZ domain"/>
    <property type="match status" value="1"/>
</dbReference>
<dbReference type="SUPFAM" id="SSF81324">
    <property type="entry name" value="Voltage-gated potassium channels"/>
    <property type="match status" value="1"/>
</dbReference>
<protein>
    <recommendedName>
        <fullName evidence="6">Voltage-gated potassium channel regulatory subunit KCNG4</fullName>
    </recommendedName>
    <alternativeName>
        <fullName>Potassium voltage-gated channel subfamily G member 4</fullName>
    </alternativeName>
    <alternativeName>
        <fullName evidence="7">Voltage-gated potassium channel subunit Kv6.3</fullName>
    </alternativeName>
    <alternativeName>
        <fullName evidence="8">Voltage-gated potassium channel subunit Kv6.4</fullName>
    </alternativeName>
</protein>
<proteinExistence type="evidence at protein level"/>
<evidence type="ECO:0000250" key="1">
    <source>
        <dbReference type="UniProtKB" id="P63142"/>
    </source>
</evidence>
<evidence type="ECO:0000256" key="2">
    <source>
        <dbReference type="SAM" id="MobiDB-lite"/>
    </source>
</evidence>
<evidence type="ECO:0000269" key="3">
    <source>
    </source>
</evidence>
<evidence type="ECO:0000269" key="4">
    <source>
    </source>
</evidence>
<evidence type="ECO:0000303" key="5">
    <source>
    </source>
</evidence>
<evidence type="ECO:0000305" key="6"/>
<evidence type="ECO:0000305" key="7">
    <source>
    </source>
</evidence>
<evidence type="ECO:0000305" key="8">
    <source>
    </source>
</evidence>
<evidence type="ECO:0000312" key="9">
    <source>
        <dbReference type="HGNC" id="HGNC:19697"/>
    </source>
</evidence>
<accession>Q8TDN1</accession>
<accession>Q96H24</accession>
<reference key="1">
    <citation type="journal article" date="2002" name="Proc. Natl. Acad. Sci. U.S.A.">
        <title>Obligatory heterotetramerization of three previously uncharacterized Kv channel alpha-subunits identified in the human genome.</title>
        <authorList>
            <person name="Ottschytsch N."/>
            <person name="Raes A."/>
            <person name="Van Hoorick D."/>
            <person name="Snyders D.J."/>
        </authorList>
    </citation>
    <scope>NUCLEOTIDE SEQUENCE [MRNA] (ISOFORM 1)</scope>
    <scope>FUNCTION</scope>
    <scope>TISSUE SPECIFICITY</scope>
    <scope>SUBCELLULAR LOCATION</scope>
    <scope>SUBUNIT</scope>
    <scope>INTERACTION WITH KCNB1</scope>
    <source>
        <tissue>Brain</tissue>
    </source>
</reference>
<reference key="2">
    <citation type="journal article" date="2004" name="Genome Res.">
        <title>The status, quality, and expansion of the NIH full-length cDNA project: the Mammalian Gene Collection (MGC).</title>
        <authorList>
            <consortium name="The MGC Project Team"/>
        </authorList>
    </citation>
    <scope>NUCLEOTIDE SEQUENCE [LARGE SCALE MRNA] (ISOFORM 2)</scope>
    <source>
        <tissue>Muscle</tissue>
    </source>
</reference>
<reference key="3">
    <citation type="journal article" date="2009" name="J. Biol. Chem.">
        <title>Mutation of histidine 105 in the T1 domain of the potassium channel Kv2.1 disrupts heteromerization with Kv6.3 and Kv6.4.</title>
        <authorList>
            <person name="Mederos y Schnitzler M."/>
            <person name="Rinne S."/>
            <person name="Skrobek L."/>
            <person name="Renigunta V."/>
            <person name="Schlichthorl G."/>
            <person name="Derst C."/>
            <person name="Gudermann T."/>
            <person name="Daut J."/>
            <person name="Preisig-Muller R."/>
        </authorList>
    </citation>
    <scope>FUNCTION</scope>
    <scope>INTERACTION WITH KCNB1</scope>
    <scope>SUBCELLULAR LOCATION</scope>
</reference>
<feature type="chain" id="PRO_0000054080" description="Voltage-gated potassium channel regulatory subunit KCNG4">
    <location>
        <begin position="1"/>
        <end position="519"/>
    </location>
</feature>
<feature type="topological domain" description="Cytoplasmic" evidence="1">
    <location>
        <begin position="1"/>
        <end position="218"/>
    </location>
</feature>
<feature type="transmembrane region" description="Helical; Name=Segment S1" evidence="1">
    <location>
        <begin position="219"/>
        <end position="240"/>
    </location>
</feature>
<feature type="topological domain" description="Extracellular" evidence="1">
    <location>
        <begin position="241"/>
        <end position="261"/>
    </location>
</feature>
<feature type="transmembrane region" description="Helical; Name=Segment S2" evidence="1">
    <location>
        <begin position="262"/>
        <end position="283"/>
    </location>
</feature>
<feature type="topological domain" description="Cytoplasmic" evidence="1">
    <location>
        <begin position="284"/>
        <end position="294"/>
    </location>
</feature>
<feature type="transmembrane region" description="Helical; Name=Segment S3" evidence="1">
    <location>
        <begin position="295"/>
        <end position="314"/>
    </location>
</feature>
<feature type="topological domain" description="Extracellular" evidence="1">
    <location>
        <begin position="315"/>
        <end position="328"/>
    </location>
</feature>
<feature type="transmembrane region" description="Helical; Voltage-sensor; Name=Segment S4" evidence="1">
    <location>
        <begin position="329"/>
        <end position="353"/>
    </location>
</feature>
<feature type="topological domain" description="Cytoplasmic" evidence="1">
    <location>
        <begin position="354"/>
        <end position="368"/>
    </location>
</feature>
<feature type="transmembrane region" description="Helical; Name=Segment S5" evidence="1">
    <location>
        <begin position="369"/>
        <end position="390"/>
    </location>
</feature>
<feature type="topological domain" description="Extracellular" evidence="1">
    <location>
        <begin position="391"/>
        <end position="405"/>
    </location>
</feature>
<feature type="intramembrane region" description="Helical; Name=Pore helix" evidence="1">
    <location>
        <begin position="406"/>
        <end position="417"/>
    </location>
</feature>
<feature type="intramembrane region" evidence="1">
    <location>
        <begin position="418"/>
        <end position="425"/>
    </location>
</feature>
<feature type="topological domain" description="Extracellular" evidence="1">
    <location>
        <begin position="426"/>
        <end position="432"/>
    </location>
</feature>
<feature type="transmembrane region" description="Helical; Name=Segment S6" evidence="1">
    <location>
        <begin position="433"/>
        <end position="461"/>
    </location>
</feature>
<feature type="topological domain" description="Cytoplasmic" evidence="1">
    <location>
        <begin position="462"/>
        <end position="519"/>
    </location>
</feature>
<feature type="region of interest" description="Disordered" evidence="2">
    <location>
        <begin position="1"/>
        <end position="25"/>
    </location>
</feature>
<feature type="short sequence motif" description="Selectivity filter" evidence="1">
    <location>
        <begin position="418"/>
        <end position="423"/>
    </location>
</feature>
<feature type="splice variant" id="VSP_001029" description="In isoform 2." evidence="5">
    <original>GECS</original>
    <variation>VSGL</variation>
    <location>
        <begin position="253"/>
        <end position="256"/>
    </location>
</feature>
<feature type="splice variant" id="VSP_001030" description="In isoform 2." evidence="5">
    <location>
        <begin position="257"/>
        <end position="519"/>
    </location>
</feature>
<feature type="sequence variant" id="VAR_053861" description="In dbSNP:rs35379218.">
    <original>G</original>
    <variation>W</variation>
    <location>
        <position position="8"/>
    </location>
</feature>
<feature type="sequence variant" id="VAR_053862" description="In dbSNP:rs11646443.">
    <original>R</original>
    <variation>W</variation>
    <location>
        <position position="206"/>
    </location>
</feature>
<feature type="sequence variant" id="VAR_053863" description="In dbSNP:rs17736370.">
    <original>C</original>
    <variation>Y</variation>
    <location>
        <position position="255"/>
    </location>
</feature>
<feature type="sequence variant" id="VAR_053864" description="In dbSNP:rs4782905.">
    <original>E</original>
    <variation>K</variation>
    <location>
        <position position="321"/>
    </location>
</feature>
<feature type="sequence variant" id="VAR_053865" description="In dbSNP:rs7196482.">
    <original>G</original>
    <variation>R</variation>
    <location>
        <position position="325"/>
    </location>
</feature>
<feature type="sequence variant" id="VAR_053866" description="In dbSNP:rs35649980.">
    <original>R</original>
    <variation>H</variation>
    <location>
        <position position="427"/>
    </location>
</feature>
<comment type="function">
    <text evidence="3 4 8">Regulatory subunit of the voltage-gated potassium (Kv) channel which, when coassembled with KCNB1, modulates the kinetics parameters of the heterotetrameric channel namely the time course of activation, deactivation and inactivation and on the voltage-dependence of activation (PubMed:12060745, PubMed:19074135). Potassium channel subunit that does not form functional channels by itself (Probable) (PubMed:12060745). Reduces the deactivation rate (PubMed:12060745, PubMed:19074135). Modulates the threshold for activation by shifting by approximately 20 mV in hyperpolarizing direction (PubMed:12060745). Markedly changes the inactivation by shifting the voltage dependence of inactivation by approximately 40 mV in hyperpolarizing direction (PubMed:12060745). Acceleratee activation and enhances the time course of activation (PubMed:12060745).</text>
</comment>
<comment type="subunit">
    <text evidence="3 4">Heterotetramer with KCNB1 (PubMed:12060745, PubMed:19074135). Does not form homomultimer (PubMed:12060745).</text>
</comment>
<comment type="subcellular location">
    <subcellularLocation>
        <location evidence="4">Cell membrane</location>
        <topology evidence="6">Multi-pass membrane protein</topology>
    </subcellularLocation>
    <text evidence="4">Has to be associated with KCNB1 or possibly another partner to get inserted in the plasma membrane (PubMed:19074135). Colocalizes with KCNB1 at the plasma membrane (PubMed:19074135). Retains in the endoplasmic reticulum in the absence of KCNB1 (PubMed:19074135).</text>
</comment>
<comment type="alternative products">
    <event type="alternative splicing"/>
    <isoform>
        <id>Q8TDN1-1</id>
        <name>1</name>
        <sequence type="displayed"/>
    </isoform>
    <isoform>
        <id>Q8TDN1-2</id>
        <name>2</name>
        <sequence type="described" ref="VSP_001029 VSP_001030"/>
    </isoform>
</comment>
<comment type="tissue specificity">
    <text evidence="3">Highly expressed in brain, and at lower levels in liver, small intestine and colon.</text>
</comment>
<comment type="domain">
    <text evidence="1">The transmembrane segment S4 functions as a voltage-sensor and is characterized by a series of positively charged amino acids at every third position. Channel opening and closing is effected by a conformation change that affects the position and orientation of the voltage-sensor paddle formed by S3 and S4 within the membrane. A transmembrane electric field that is positive inside would push the positively charged S4 segment outwards, thereby opening the pore, while a field that is negative inside would pull the S4 segment inwards and close the pore. Changes in the position and orientation of S4 are then transmitted to the activation gate formed by the inner helix bundle via the S4-S5 linker region.</text>
</comment>
<comment type="similarity">
    <text evidence="6">Belongs to the potassium channel family. G (TC 1.A.1.2) subfamily. Kv6.4/KCNG4 sub-subfamily.</text>
</comment>
<gene>
    <name evidence="9" type="primary">KCNG4</name>
    <name type="synonym">KCNG3</name>
</gene>
<name>KCNG4_HUMAN</name>